<reference key="1">
    <citation type="journal article" date="1997" name="Microbiology">
        <title>Genomic rearrangements during evolution of the obligate intracellular parasite Rickettsia prowazekii as inferred from an analysis of 52015 bp nucleotide sequence.</title>
        <authorList>
            <person name="Andersson J.O."/>
            <person name="Andersson S.G.E."/>
        </authorList>
    </citation>
    <scope>NUCLEOTIDE SEQUENCE [GENOMIC DNA]</scope>
    <source>
        <strain>Madrid E</strain>
    </source>
</reference>
<reference key="2">
    <citation type="journal article" date="1998" name="Nature">
        <title>The genome sequence of Rickettsia prowazekii and the origin of mitochondria.</title>
        <authorList>
            <person name="Andersson S.G.E."/>
            <person name="Zomorodipour A."/>
            <person name="Andersson J.O."/>
            <person name="Sicheritz-Ponten T."/>
            <person name="Alsmark U.C.M."/>
            <person name="Podowski R.M."/>
            <person name="Naeslund A.K."/>
            <person name="Eriksson A.-S."/>
            <person name="Winkler H.H."/>
            <person name="Kurland C.G."/>
        </authorList>
    </citation>
    <scope>NUCLEOTIDE SEQUENCE [LARGE SCALE GENOMIC DNA]</scope>
    <source>
        <strain>Madrid E</strain>
    </source>
</reference>
<organism>
    <name type="scientific">Rickettsia prowazekii (strain Madrid E)</name>
    <dbReference type="NCBI Taxonomy" id="272947"/>
    <lineage>
        <taxon>Bacteria</taxon>
        <taxon>Pseudomonadati</taxon>
        <taxon>Pseudomonadota</taxon>
        <taxon>Alphaproteobacteria</taxon>
        <taxon>Rickettsiales</taxon>
        <taxon>Rickettsiaceae</taxon>
        <taxon>Rickettsieae</taxon>
        <taxon>Rickettsia</taxon>
        <taxon>typhus group</taxon>
    </lineage>
</organism>
<sequence>MNQFEAYSLLFVDSFVSNLIISFQNELIFHSMQMLVGYNRLIMLLVAICSSLSGNTVNYLFGKIVLNIFYASKNEQNILRHKNLTKLYYQYETFIIFLISFPFWGCFVSLFSGFFKTKFLKFLSIGCLAKACYYASKIYIF</sequence>
<proteinExistence type="predicted"/>
<gene>
    <name type="ordered locus">RP436</name>
</gene>
<keyword id="KW-1003">Cell membrane</keyword>
<keyword id="KW-0472">Membrane</keyword>
<keyword id="KW-1185">Reference proteome</keyword>
<keyword id="KW-0812">Transmembrane</keyword>
<keyword id="KW-1133">Transmembrane helix</keyword>
<dbReference type="EMBL" id="Y11777">
    <property type="protein sequence ID" value="CAA72442.1"/>
    <property type="molecule type" value="Genomic_DNA"/>
</dbReference>
<dbReference type="EMBL" id="AJ235271">
    <property type="protein sequence ID" value="CAA14893.1"/>
    <property type="molecule type" value="Genomic_DNA"/>
</dbReference>
<dbReference type="PIR" id="C71702">
    <property type="entry name" value="C71702"/>
</dbReference>
<dbReference type="RefSeq" id="NP_220817.1">
    <property type="nucleotide sequence ID" value="NC_000963.1"/>
</dbReference>
<dbReference type="RefSeq" id="WP_004597649.1">
    <property type="nucleotide sequence ID" value="NC_000963.1"/>
</dbReference>
<dbReference type="STRING" id="272947.gene:17555516"/>
<dbReference type="EnsemblBacteria" id="CAA14893">
    <property type="protein sequence ID" value="CAA14893"/>
    <property type="gene ID" value="CAA14893"/>
</dbReference>
<dbReference type="KEGG" id="rpr:RP436"/>
<dbReference type="PATRIC" id="fig|272947.5.peg.449"/>
<dbReference type="eggNOG" id="COG1238">
    <property type="taxonomic scope" value="Bacteria"/>
</dbReference>
<dbReference type="HOGENOM" id="CLU_1823859_0_0_5"/>
<dbReference type="OrthoDB" id="7161069at2"/>
<dbReference type="Proteomes" id="UP000002480">
    <property type="component" value="Chromosome"/>
</dbReference>
<dbReference type="GO" id="GO:0005886">
    <property type="term" value="C:plasma membrane"/>
    <property type="evidence" value="ECO:0007669"/>
    <property type="project" value="UniProtKB-SubCell"/>
</dbReference>
<accession>O05963</accession>
<name>Y436_RICPR</name>
<comment type="subcellular location">
    <subcellularLocation>
        <location evidence="2">Cell membrane</location>
        <topology evidence="2">Multi-pass membrane protein</topology>
    </subcellularLocation>
</comment>
<feature type="chain" id="PRO_0000101370" description="Uncharacterized protein RP436">
    <location>
        <begin position="1"/>
        <end position="141"/>
    </location>
</feature>
<feature type="transmembrane region" description="Helical" evidence="1">
    <location>
        <begin position="41"/>
        <end position="61"/>
    </location>
</feature>
<feature type="transmembrane region" description="Helical" evidence="1">
    <location>
        <begin position="95"/>
        <end position="115"/>
    </location>
</feature>
<evidence type="ECO:0000255" key="1"/>
<evidence type="ECO:0000305" key="2"/>
<protein>
    <recommendedName>
        <fullName>Uncharacterized protein RP436</fullName>
    </recommendedName>
</protein>